<name>THA11_XENLA</name>
<dbReference type="EMBL" id="BC071032">
    <property type="protein sequence ID" value="AAH71032.1"/>
    <property type="status" value="ALT_INIT"/>
    <property type="molecule type" value="mRNA"/>
</dbReference>
<dbReference type="SMR" id="Q6IR68"/>
<dbReference type="GeneID" id="432088"/>
<dbReference type="KEGG" id="xla:432088"/>
<dbReference type="AGR" id="Xenbase:XB-GENE-5954813"/>
<dbReference type="CTD" id="432088"/>
<dbReference type="Xenbase" id="XB-GENE-5954813">
    <property type="gene designation" value="thap11.L"/>
</dbReference>
<dbReference type="OrthoDB" id="8948150at2759"/>
<dbReference type="Proteomes" id="UP000186698">
    <property type="component" value="Chromosome 4L"/>
</dbReference>
<dbReference type="Bgee" id="432088">
    <property type="expression patterns" value="Expressed in internal ear and 19 other cell types or tissues"/>
</dbReference>
<dbReference type="GO" id="GO:0005654">
    <property type="term" value="C:nucleoplasm"/>
    <property type="evidence" value="ECO:0000318"/>
    <property type="project" value="GO_Central"/>
</dbReference>
<dbReference type="GO" id="GO:0003677">
    <property type="term" value="F:DNA binding"/>
    <property type="evidence" value="ECO:0000250"/>
    <property type="project" value="UniProtKB"/>
</dbReference>
<dbReference type="GO" id="GO:0000978">
    <property type="term" value="F:RNA polymerase II cis-regulatory region sequence-specific DNA binding"/>
    <property type="evidence" value="ECO:0000318"/>
    <property type="project" value="GO_Central"/>
</dbReference>
<dbReference type="GO" id="GO:0008270">
    <property type="term" value="F:zinc ion binding"/>
    <property type="evidence" value="ECO:0000250"/>
    <property type="project" value="UniProtKB"/>
</dbReference>
<dbReference type="GO" id="GO:0006357">
    <property type="term" value="P:regulation of transcription by RNA polymerase II"/>
    <property type="evidence" value="ECO:0000318"/>
    <property type="project" value="GO_Central"/>
</dbReference>
<dbReference type="CDD" id="cd22291">
    <property type="entry name" value="cc_THAP11_C"/>
    <property type="match status" value="1"/>
</dbReference>
<dbReference type="InterPro" id="IPR006612">
    <property type="entry name" value="THAP_Znf"/>
</dbReference>
<dbReference type="PANTHER" id="PTHR22794">
    <property type="entry name" value="THAP DOMAIN PROTEIN 11"/>
    <property type="match status" value="1"/>
</dbReference>
<dbReference type="PANTHER" id="PTHR22794:SF2">
    <property type="entry name" value="THAP DOMAIN-CONTAINING PROTEIN 11"/>
    <property type="match status" value="1"/>
</dbReference>
<dbReference type="Pfam" id="PF05485">
    <property type="entry name" value="THAP"/>
    <property type="match status" value="1"/>
</dbReference>
<dbReference type="SMART" id="SM00692">
    <property type="entry name" value="DM3"/>
    <property type="match status" value="1"/>
</dbReference>
<dbReference type="SMART" id="SM00980">
    <property type="entry name" value="THAP"/>
    <property type="match status" value="1"/>
</dbReference>
<dbReference type="SUPFAM" id="SSF57716">
    <property type="entry name" value="Glucocorticoid receptor-like (DNA-binding domain)"/>
    <property type="match status" value="1"/>
</dbReference>
<dbReference type="PROSITE" id="PS50950">
    <property type="entry name" value="ZF_THAP"/>
    <property type="match status" value="1"/>
</dbReference>
<reference key="1">
    <citation type="submission" date="2004-05" db="EMBL/GenBank/DDBJ databases">
        <authorList>
            <consortium name="NIH - Xenopus Gene Collection (XGC) project"/>
        </authorList>
    </citation>
    <scope>NUCLEOTIDE SEQUENCE [LARGE SCALE MRNA]</scope>
    <source>
        <tissue>Kidney</tissue>
    </source>
</reference>
<gene>
    <name type="primary">thap11</name>
</gene>
<comment type="function">
    <text evidence="1">Transcriptional repressor that plays a central role for embryogenesis and the pluripotency of embryonic stem (ES) cells. Sequence-specific DNA-binding factor that represses gene expression in pluripotent ES cells by directly binding to key genetic loci and recruiting epigenetic modifiers (By similarity).</text>
</comment>
<comment type="subcellular location">
    <subcellularLocation>
        <location evidence="1">Nucleus</location>
    </subcellularLocation>
</comment>
<comment type="similarity">
    <text evidence="4">Belongs to the THAP11 family.</text>
</comment>
<comment type="sequence caution" evidence="4">
    <conflict type="erroneous initiation">
        <sequence resource="EMBL-CDS" id="AAH71032"/>
    </conflict>
</comment>
<protein>
    <recommendedName>
        <fullName>THAP domain-containing protein 11</fullName>
    </recommendedName>
</protein>
<proteinExistence type="evidence at transcript level"/>
<feature type="chain" id="PRO_0000355150" description="THAP domain-containing protein 11">
    <location>
        <begin position="1"/>
        <end position="298"/>
    </location>
</feature>
<feature type="zinc finger region" description="THAP-type" evidence="3">
    <location>
        <begin position="6"/>
        <end position="64"/>
    </location>
</feature>
<feature type="coiled-coil region" evidence="2">
    <location>
        <begin position="242"/>
        <end position="283"/>
    </location>
</feature>
<evidence type="ECO:0000250" key="1"/>
<evidence type="ECO:0000255" key="2"/>
<evidence type="ECO:0000255" key="3">
    <source>
        <dbReference type="PROSITE-ProRule" id="PRU00309"/>
    </source>
</evidence>
<evidence type="ECO:0000305" key="4"/>
<keyword id="KW-0175">Coiled coil</keyword>
<keyword id="KW-0238">DNA-binding</keyword>
<keyword id="KW-0479">Metal-binding</keyword>
<keyword id="KW-0539">Nucleus</keyword>
<keyword id="KW-1185">Reference proteome</keyword>
<keyword id="KW-0678">Repressor</keyword>
<keyword id="KW-0804">Transcription</keyword>
<keyword id="KW-0805">Transcription regulation</keyword>
<keyword id="KW-0862">Zinc</keyword>
<keyword id="KW-0863">Zinc-finger</keyword>
<sequence length="298" mass="32412">MPGFTCCVPGCYSNSHRDKGLHFYTFPKDPELRCLWLKNVSRGGVSGCFSTFQPTNGHRVCSLHFQGGRKSYSIKVPTIFPLRGVNEKRTRRSSTKKRQQPNYTPAATTVLVTGLPGQEEQEVLELTAGGAEMMLLSTTAGMGATITNVEGSSAVIGATIDAMGTAAVERGSVAAPSNLAVKLDVGEAHAISTHFSSDASHGSHQQLQVVVVGDEPFPSVDCWPSLLGSDHSYSMSSGTTTEELLRKLNEQRDIIALMEVKMKEMKSSIKHLKVTEVKLREELRQKDKDKVSPMIKSN</sequence>
<accession>Q6IR68</accession>
<organism>
    <name type="scientific">Xenopus laevis</name>
    <name type="common">African clawed frog</name>
    <dbReference type="NCBI Taxonomy" id="8355"/>
    <lineage>
        <taxon>Eukaryota</taxon>
        <taxon>Metazoa</taxon>
        <taxon>Chordata</taxon>
        <taxon>Craniata</taxon>
        <taxon>Vertebrata</taxon>
        <taxon>Euteleostomi</taxon>
        <taxon>Amphibia</taxon>
        <taxon>Batrachia</taxon>
        <taxon>Anura</taxon>
        <taxon>Pipoidea</taxon>
        <taxon>Pipidae</taxon>
        <taxon>Xenopodinae</taxon>
        <taxon>Xenopus</taxon>
        <taxon>Xenopus</taxon>
    </lineage>
</organism>